<name>FLXL1_ARATH</name>
<proteinExistence type="evidence at protein level"/>
<organism>
    <name type="scientific">Arabidopsis thaliana</name>
    <name type="common">Mouse-ear cress</name>
    <dbReference type="NCBI Taxonomy" id="3702"/>
    <lineage>
        <taxon>Eukaryota</taxon>
        <taxon>Viridiplantae</taxon>
        <taxon>Streptophyta</taxon>
        <taxon>Embryophyta</taxon>
        <taxon>Tracheophyta</taxon>
        <taxon>Spermatophyta</taxon>
        <taxon>Magnoliopsida</taxon>
        <taxon>eudicotyledons</taxon>
        <taxon>Gunneridae</taxon>
        <taxon>Pentapetalae</taxon>
        <taxon>rosids</taxon>
        <taxon>malvids</taxon>
        <taxon>Brassicales</taxon>
        <taxon>Brassicaceae</taxon>
        <taxon>Camelineae</taxon>
        <taxon>Arabidopsis</taxon>
    </lineage>
</organism>
<reference key="1">
    <citation type="journal article" date="2000" name="DNA Res.">
        <title>Structural analysis of Arabidopsis thaliana chromosome 3. I. Sequence features of the regions of 4,504,864 bp covered by sixty P1 and TAC clones.</title>
        <authorList>
            <person name="Sato S."/>
            <person name="Nakamura Y."/>
            <person name="Kaneko T."/>
            <person name="Katoh T."/>
            <person name="Asamizu E."/>
            <person name="Tabata S."/>
        </authorList>
    </citation>
    <scope>NUCLEOTIDE SEQUENCE [LARGE SCALE GENOMIC DNA]</scope>
    <source>
        <strain>cv. Columbia</strain>
    </source>
</reference>
<reference key="2">
    <citation type="journal article" date="2017" name="Plant J.">
        <title>Araport11: a complete reannotation of the Arabidopsis thaliana reference genome.</title>
        <authorList>
            <person name="Cheng C.Y."/>
            <person name="Krishnakumar V."/>
            <person name="Chan A.P."/>
            <person name="Thibaud-Nissen F."/>
            <person name="Schobel S."/>
            <person name="Town C.D."/>
        </authorList>
    </citation>
    <scope>GENOME REANNOTATION</scope>
    <source>
        <strain>cv. Columbia</strain>
    </source>
</reference>
<reference key="3">
    <citation type="journal article" date="2003" name="Science">
        <title>Empirical analysis of transcriptional activity in the Arabidopsis genome.</title>
        <authorList>
            <person name="Yamada K."/>
            <person name="Lim J."/>
            <person name="Dale J.M."/>
            <person name="Chen H."/>
            <person name="Shinn P."/>
            <person name="Palm C.J."/>
            <person name="Southwick A.M."/>
            <person name="Wu H.C."/>
            <person name="Kim C.J."/>
            <person name="Nguyen M."/>
            <person name="Pham P.K."/>
            <person name="Cheuk R.F."/>
            <person name="Karlin-Newmann G."/>
            <person name="Liu S.X."/>
            <person name="Lam B."/>
            <person name="Sakano H."/>
            <person name="Wu T."/>
            <person name="Yu G."/>
            <person name="Miranda M."/>
            <person name="Quach H.L."/>
            <person name="Tripp M."/>
            <person name="Chang C.H."/>
            <person name="Lee J.M."/>
            <person name="Toriumi M.J."/>
            <person name="Chan M.M."/>
            <person name="Tang C.C."/>
            <person name="Onodera C.S."/>
            <person name="Deng J.M."/>
            <person name="Akiyama K."/>
            <person name="Ansari Y."/>
            <person name="Arakawa T."/>
            <person name="Banh J."/>
            <person name="Banno F."/>
            <person name="Bowser L."/>
            <person name="Brooks S.Y."/>
            <person name="Carninci P."/>
            <person name="Chao Q."/>
            <person name="Choy N."/>
            <person name="Enju A."/>
            <person name="Goldsmith A.D."/>
            <person name="Gurjal M."/>
            <person name="Hansen N.F."/>
            <person name="Hayashizaki Y."/>
            <person name="Johnson-Hopson C."/>
            <person name="Hsuan V.W."/>
            <person name="Iida K."/>
            <person name="Karnes M."/>
            <person name="Khan S."/>
            <person name="Koesema E."/>
            <person name="Ishida J."/>
            <person name="Jiang P.X."/>
            <person name="Jones T."/>
            <person name="Kawai J."/>
            <person name="Kamiya A."/>
            <person name="Meyers C."/>
            <person name="Nakajima M."/>
            <person name="Narusaka M."/>
            <person name="Seki M."/>
            <person name="Sakurai T."/>
            <person name="Satou M."/>
            <person name="Tamse R."/>
            <person name="Vaysberg M."/>
            <person name="Wallender E.K."/>
            <person name="Wong C."/>
            <person name="Yamamura Y."/>
            <person name="Yuan S."/>
            <person name="Shinozaki K."/>
            <person name="Davis R.W."/>
            <person name="Theologis A."/>
            <person name="Ecker J.R."/>
        </authorList>
    </citation>
    <scope>NUCLEOTIDE SEQUENCE [LARGE SCALE MRNA]</scope>
    <source>
        <strain>cv. Columbia</strain>
    </source>
</reference>
<reference key="4">
    <citation type="journal article" date="2011" name="Plant Cell">
        <title>The FRIGIDA complex activates transcription of FLC, a strong flowering repressor in Arabidopsis, by recruiting chromatin modification factors.</title>
        <authorList>
            <person name="Choi K."/>
            <person name="Kim J."/>
            <person name="Hwang H.J."/>
            <person name="Kim S."/>
            <person name="Park C."/>
            <person name="Kim S.Y."/>
            <person name="Lee I."/>
        </authorList>
    </citation>
    <scope>FUNCTION</scope>
    <scope>INTERACTION WITH FRI</scope>
    <scope>DISRUPTION PHENOTYPE</scope>
</reference>
<reference key="5">
    <citation type="journal article" date="2013" name="Nat. Commun.">
        <title>Two FLX family members are non-redundantly required to establish the vernalization requirement in Arabidopsis.</title>
        <authorList>
            <person name="Lee J."/>
            <person name="Amasino R.M."/>
        </authorList>
    </citation>
    <scope>FUNCTION</scope>
    <scope>DISRUPTION PHENOTYPE</scope>
</reference>
<sequence>MSGRNRGPPPPSMKGGSYSGLQAPVHQPPFVRGLGGGPVPPPPHPSMIDDSREPQFRVDARGLPPQFSILEDRLAAQNQDVQGLLADNQRLAATHVALKQELEVAQHELQRIMHYIDSLRAEEEIMMREMYDKSMRSEMELREVDAMRAEIQKIRADIKEFTSGRQELTSQVHLMTQDLARLTADLQQIPTLTAEIENTKQELQRARAAIDYEKKGYAENYEHGKIMEHKLVAMARELEKLRAEIANSETSAYANGPVGNPGGVAYGGGYGNPEAGYPVNPYQPNYTMNPAQTGVVGYYPPPYGPQAAWAGGYDPQQQQQQQPPPQGQGHR</sequence>
<accession>Q93V84</accession>
<accession>Q9LUC0</accession>
<dbReference type="EMBL" id="AB023038">
    <property type="protein sequence ID" value="BAB02406.1"/>
    <property type="status" value="ALT_SEQ"/>
    <property type="molecule type" value="Genomic_DNA"/>
</dbReference>
<dbReference type="EMBL" id="CP002686">
    <property type="protein sequence ID" value="AEE75563.1"/>
    <property type="molecule type" value="Genomic_DNA"/>
</dbReference>
<dbReference type="EMBL" id="AY035083">
    <property type="protein sequence ID" value="AAK59588.1"/>
    <property type="molecule type" value="mRNA"/>
</dbReference>
<dbReference type="EMBL" id="AY051034">
    <property type="protein sequence ID" value="AAK93711.1"/>
    <property type="molecule type" value="mRNA"/>
</dbReference>
<dbReference type="RefSeq" id="NP_566492.1">
    <property type="nucleotide sequence ID" value="NM_112336.5"/>
</dbReference>
<dbReference type="SMR" id="Q93V84"/>
<dbReference type="FunCoup" id="Q93V84">
    <property type="interactions" value="8"/>
</dbReference>
<dbReference type="IntAct" id="Q93V84">
    <property type="interactions" value="1"/>
</dbReference>
<dbReference type="STRING" id="3702.Q93V84"/>
<dbReference type="PaxDb" id="3702-AT3G14750.1"/>
<dbReference type="ProteomicsDB" id="230106"/>
<dbReference type="EnsemblPlants" id="AT3G14750.1">
    <property type="protein sequence ID" value="AT3G14750.1"/>
    <property type="gene ID" value="AT3G14750"/>
</dbReference>
<dbReference type="GeneID" id="820703"/>
<dbReference type="Gramene" id="AT3G14750.1">
    <property type="protein sequence ID" value="AT3G14750.1"/>
    <property type="gene ID" value="AT3G14750"/>
</dbReference>
<dbReference type="KEGG" id="ath:AT3G14750"/>
<dbReference type="Araport" id="AT3G14750"/>
<dbReference type="TAIR" id="AT3G14750"/>
<dbReference type="eggNOG" id="ENOG502QRPR">
    <property type="taxonomic scope" value="Eukaryota"/>
</dbReference>
<dbReference type="HOGENOM" id="CLU_051930_4_1_1"/>
<dbReference type="InParanoid" id="Q93V84"/>
<dbReference type="OMA" id="NPYPGIY"/>
<dbReference type="PhylomeDB" id="Q93V84"/>
<dbReference type="PRO" id="PR:Q93V84"/>
<dbReference type="Proteomes" id="UP000006548">
    <property type="component" value="Chromosome 3"/>
</dbReference>
<dbReference type="ExpressionAtlas" id="Q93V84">
    <property type="expression patterns" value="baseline and differential"/>
</dbReference>
<dbReference type="GO" id="GO:0016604">
    <property type="term" value="C:nuclear body"/>
    <property type="evidence" value="ECO:0000314"/>
    <property type="project" value="TAIR"/>
</dbReference>
<dbReference type="GO" id="GO:0005634">
    <property type="term" value="C:nucleus"/>
    <property type="evidence" value="ECO:0000314"/>
    <property type="project" value="TAIR"/>
</dbReference>
<dbReference type="GO" id="GO:0030154">
    <property type="term" value="P:cell differentiation"/>
    <property type="evidence" value="ECO:0007669"/>
    <property type="project" value="UniProtKB-KW"/>
</dbReference>
<dbReference type="GO" id="GO:0009908">
    <property type="term" value="P:flower development"/>
    <property type="evidence" value="ECO:0007669"/>
    <property type="project" value="UniProtKB-KW"/>
</dbReference>
<dbReference type="InterPro" id="IPR040353">
    <property type="entry name" value="FLX/FLX-like"/>
</dbReference>
<dbReference type="PANTHER" id="PTHR33405:SF7">
    <property type="entry name" value="PROTEIN FLX-LIKE 1"/>
    <property type="match status" value="1"/>
</dbReference>
<dbReference type="PANTHER" id="PTHR33405">
    <property type="entry name" value="PROTEIN FLX-LIKE 2"/>
    <property type="match status" value="1"/>
</dbReference>
<comment type="function">
    <text evidence="3 4">Has no transcriptional activation activity.</text>
</comment>
<comment type="subunit">
    <text evidence="3">Interacts with FRI.</text>
</comment>
<comment type="disruption phenotype">
    <text evidence="3 4">No suppression of FRI activity.</text>
</comment>
<comment type="similarity">
    <text evidence="5">Belongs to the FLX family.</text>
</comment>
<comment type="sequence caution" evidence="5">
    <conflict type="erroneous gene model prediction">
        <sequence resource="EMBL-CDS" id="BAB02406"/>
    </conflict>
</comment>
<feature type="chain" id="PRO_0000423735" description="Protein FLX-like 1">
    <location>
        <begin position="1"/>
        <end position="331"/>
    </location>
</feature>
<feature type="region of interest" description="Disordered" evidence="2">
    <location>
        <begin position="1"/>
        <end position="51"/>
    </location>
</feature>
<feature type="region of interest" description="Disordered" evidence="2">
    <location>
        <begin position="306"/>
        <end position="331"/>
    </location>
</feature>
<feature type="coiled-coil region" evidence="1">
    <location>
        <begin position="69"/>
        <end position="252"/>
    </location>
</feature>
<feature type="compositionally biased region" description="Low complexity" evidence="2">
    <location>
        <begin position="306"/>
        <end position="321"/>
    </location>
</feature>
<feature type="compositionally biased region" description="Pro residues" evidence="2">
    <location>
        <begin position="322"/>
        <end position="331"/>
    </location>
</feature>
<keyword id="KW-0175">Coiled coil</keyword>
<keyword id="KW-0217">Developmental protein</keyword>
<keyword id="KW-0221">Differentiation</keyword>
<keyword id="KW-0287">Flowering</keyword>
<keyword id="KW-1185">Reference proteome</keyword>
<evidence type="ECO:0000255" key="1"/>
<evidence type="ECO:0000256" key="2">
    <source>
        <dbReference type="SAM" id="MobiDB-lite"/>
    </source>
</evidence>
<evidence type="ECO:0000269" key="3">
    <source>
    </source>
</evidence>
<evidence type="ECO:0000269" key="4">
    <source>
    </source>
</evidence>
<evidence type="ECO:0000305" key="5"/>
<gene>
    <name type="primary">FLXL1</name>
    <name type="synonym">FLL1</name>
    <name type="ordered locus">At3g14750</name>
    <name type="ORF">MIE1.26</name>
</gene>
<protein>
    <recommendedName>
        <fullName>Protein FLX-like 1</fullName>
        <shortName>AtFLXL1</shortName>
    </recommendedName>
</protein>